<protein>
    <recommendedName>
        <fullName evidence="1">ATP-dependent zinc metalloprotease FtsH</fullName>
        <ecNumber evidence="1">3.4.24.-</ecNumber>
    </recommendedName>
</protein>
<feature type="chain" id="PRO_5000427418" description="ATP-dependent zinc metalloprotease FtsH">
    <location>
        <begin position="1"/>
        <end position="656"/>
    </location>
</feature>
<feature type="topological domain" description="Cytoplasmic" evidence="1">
    <location>
        <begin position="1"/>
        <end position="10"/>
    </location>
</feature>
<feature type="transmembrane region" description="Helical" evidence="1">
    <location>
        <begin position="11"/>
        <end position="31"/>
    </location>
</feature>
<feature type="topological domain" description="Extracellular" evidence="1">
    <location>
        <begin position="32"/>
        <end position="116"/>
    </location>
</feature>
<feature type="transmembrane region" description="Helical" evidence="1">
    <location>
        <begin position="117"/>
        <end position="137"/>
    </location>
</feature>
<feature type="topological domain" description="Cytoplasmic" evidence="1">
    <location>
        <begin position="138"/>
        <end position="656"/>
    </location>
</feature>
<feature type="region of interest" description="Disordered" evidence="2">
    <location>
        <begin position="622"/>
        <end position="656"/>
    </location>
</feature>
<feature type="compositionally biased region" description="Polar residues" evidence="2">
    <location>
        <begin position="622"/>
        <end position="632"/>
    </location>
</feature>
<feature type="active site" evidence="1">
    <location>
        <position position="433"/>
    </location>
</feature>
<feature type="binding site" evidence="1">
    <location>
        <begin position="209"/>
        <end position="216"/>
    </location>
    <ligand>
        <name>ATP</name>
        <dbReference type="ChEBI" id="CHEBI:30616"/>
    </ligand>
</feature>
<feature type="binding site" evidence="1">
    <location>
        <position position="432"/>
    </location>
    <ligand>
        <name>Zn(2+)</name>
        <dbReference type="ChEBI" id="CHEBI:29105"/>
        <note>catalytic</note>
    </ligand>
</feature>
<feature type="binding site" evidence="1">
    <location>
        <position position="436"/>
    </location>
    <ligand>
        <name>Zn(2+)</name>
        <dbReference type="ChEBI" id="CHEBI:29105"/>
        <note>catalytic</note>
    </ligand>
</feature>
<feature type="binding site" evidence="1">
    <location>
        <position position="511"/>
    </location>
    <ligand>
        <name>Zn(2+)</name>
        <dbReference type="ChEBI" id="CHEBI:29105"/>
        <note>catalytic</note>
    </ligand>
</feature>
<keyword id="KW-0067">ATP-binding</keyword>
<keyword id="KW-1003">Cell membrane</keyword>
<keyword id="KW-0378">Hydrolase</keyword>
<keyword id="KW-0472">Membrane</keyword>
<keyword id="KW-0479">Metal-binding</keyword>
<keyword id="KW-0482">Metalloprotease</keyword>
<keyword id="KW-0547">Nucleotide-binding</keyword>
<keyword id="KW-0645">Protease</keyword>
<keyword id="KW-0812">Transmembrane</keyword>
<keyword id="KW-1133">Transmembrane helix</keyword>
<keyword id="KW-0862">Zinc</keyword>
<reference key="1">
    <citation type="submission" date="2008-12" db="EMBL/GenBank/DDBJ databases">
        <title>Complete sequence of Chloroflexus aggregans DSM 9485.</title>
        <authorList>
            <consortium name="US DOE Joint Genome Institute"/>
            <person name="Lucas S."/>
            <person name="Copeland A."/>
            <person name="Lapidus A."/>
            <person name="Glavina del Rio T."/>
            <person name="Dalin E."/>
            <person name="Tice H."/>
            <person name="Pitluck S."/>
            <person name="Foster B."/>
            <person name="Larimer F."/>
            <person name="Land M."/>
            <person name="Hauser L."/>
            <person name="Kyrpides N."/>
            <person name="Mikhailova N."/>
            <person name="Bryant D.A."/>
            <person name="Richardson P."/>
        </authorList>
    </citation>
    <scope>NUCLEOTIDE SEQUENCE [LARGE SCALE GENOMIC DNA]</scope>
    <source>
        <strain>MD-66 / DSM 9485</strain>
    </source>
</reference>
<name>FTSH_CHLAD</name>
<sequence length="656" mass="71484">MGDNRWLKNSFVYLIILVAALALFFQYLGPGASQTEEKGIADVIADAQAGLVREIQAQAGDEQIIVTYNDGKKYRSRLESADSVMRLLADYGVPLRNEQGQRTINVIVQPAPAWGGLLSIFTILLPTLLLIGFFVFFMRQAQGSNNQAMSFGKSRARMFAGDKPTITFADVAGQEEAKQDLAEIVEFLKFPDKFAALGARIPRGVLMVGPPGTGKTLLSRAVAGEAGVPFFSISGSEFVEMFVGVGASRVRDLFDQAKRNAPCIVFIDEIDAVGRQRGAGLGGSHDEREQTLNQILVEMDGFDTNTNVIVIAATNRPDVLDPALVRPGRFDRQVVLDAPDVRGRIEILKVHVKGKPLAEDVNLEILARQTPGFSGADLMNVVNEAAILAARRSKRKISMAEFQDAVERVAIGGPERRSRVMTDRQKLVVAYHEAGHAIVGAALPKADKVQKVTIIPRGQAGGYTLFLPDEDSLNLRTVSQFKARLAVSLGGRVAEEIVFGNEEVTTGASGDLVQVTRIARAMVTRYGMSQRLGPIVFGEKEELIFLGREISEQRNYGDEVARQIDEEVHAIVSEAYETAQQILLQNRAVLDDMANALIEYETLDGEQLEELIRRVKPLTLDFSKSGSTTPNGRTEDRPAQPDAPQMGLGGPSPLPA</sequence>
<comment type="function">
    <text evidence="1">Acts as a processive, ATP-dependent zinc metallopeptidase for both cytoplasmic and membrane proteins. Plays a role in the quality control of integral membrane proteins.</text>
</comment>
<comment type="cofactor">
    <cofactor evidence="1">
        <name>Zn(2+)</name>
        <dbReference type="ChEBI" id="CHEBI:29105"/>
    </cofactor>
    <text evidence="1">Binds 1 zinc ion per subunit.</text>
</comment>
<comment type="subunit">
    <text evidence="1">Homohexamer.</text>
</comment>
<comment type="subcellular location">
    <subcellularLocation>
        <location evidence="1">Cell membrane</location>
        <topology evidence="1">Multi-pass membrane protein</topology>
        <orientation evidence="1">Cytoplasmic side</orientation>
    </subcellularLocation>
</comment>
<comment type="similarity">
    <text evidence="1">In the central section; belongs to the AAA ATPase family.</text>
</comment>
<comment type="similarity">
    <text evidence="1">In the C-terminal section; belongs to the peptidase M41 family.</text>
</comment>
<evidence type="ECO:0000255" key="1">
    <source>
        <dbReference type="HAMAP-Rule" id="MF_01458"/>
    </source>
</evidence>
<evidence type="ECO:0000256" key="2">
    <source>
        <dbReference type="SAM" id="MobiDB-lite"/>
    </source>
</evidence>
<organism>
    <name type="scientific">Chloroflexus aggregans (strain MD-66 / DSM 9485)</name>
    <dbReference type="NCBI Taxonomy" id="326427"/>
    <lineage>
        <taxon>Bacteria</taxon>
        <taxon>Bacillati</taxon>
        <taxon>Chloroflexota</taxon>
        <taxon>Chloroflexia</taxon>
        <taxon>Chloroflexales</taxon>
        <taxon>Chloroflexineae</taxon>
        <taxon>Chloroflexaceae</taxon>
        <taxon>Chloroflexus</taxon>
    </lineage>
</organism>
<proteinExistence type="inferred from homology"/>
<dbReference type="EC" id="3.4.24.-" evidence="1"/>
<dbReference type="EMBL" id="CP001337">
    <property type="protein sequence ID" value="ACL25532.1"/>
    <property type="molecule type" value="Genomic_DNA"/>
</dbReference>
<dbReference type="RefSeq" id="WP_015941389.1">
    <property type="nucleotide sequence ID" value="NC_011831.1"/>
</dbReference>
<dbReference type="SMR" id="B8G4Q6"/>
<dbReference type="STRING" id="326427.Cagg_2664"/>
<dbReference type="KEGG" id="cag:Cagg_2664"/>
<dbReference type="eggNOG" id="COG0465">
    <property type="taxonomic scope" value="Bacteria"/>
</dbReference>
<dbReference type="HOGENOM" id="CLU_000688_16_2_0"/>
<dbReference type="OrthoDB" id="9809379at2"/>
<dbReference type="Proteomes" id="UP000002508">
    <property type="component" value="Chromosome"/>
</dbReference>
<dbReference type="GO" id="GO:0005886">
    <property type="term" value="C:plasma membrane"/>
    <property type="evidence" value="ECO:0007669"/>
    <property type="project" value="UniProtKB-SubCell"/>
</dbReference>
<dbReference type="GO" id="GO:0005524">
    <property type="term" value="F:ATP binding"/>
    <property type="evidence" value="ECO:0007669"/>
    <property type="project" value="UniProtKB-UniRule"/>
</dbReference>
<dbReference type="GO" id="GO:0016887">
    <property type="term" value="F:ATP hydrolysis activity"/>
    <property type="evidence" value="ECO:0007669"/>
    <property type="project" value="UniProtKB-UniRule"/>
</dbReference>
<dbReference type="GO" id="GO:0004176">
    <property type="term" value="F:ATP-dependent peptidase activity"/>
    <property type="evidence" value="ECO:0007669"/>
    <property type="project" value="InterPro"/>
</dbReference>
<dbReference type="GO" id="GO:0004222">
    <property type="term" value="F:metalloendopeptidase activity"/>
    <property type="evidence" value="ECO:0007669"/>
    <property type="project" value="InterPro"/>
</dbReference>
<dbReference type="GO" id="GO:0008270">
    <property type="term" value="F:zinc ion binding"/>
    <property type="evidence" value="ECO:0007669"/>
    <property type="project" value="UniProtKB-UniRule"/>
</dbReference>
<dbReference type="GO" id="GO:0030163">
    <property type="term" value="P:protein catabolic process"/>
    <property type="evidence" value="ECO:0007669"/>
    <property type="project" value="UniProtKB-UniRule"/>
</dbReference>
<dbReference type="GO" id="GO:0006508">
    <property type="term" value="P:proteolysis"/>
    <property type="evidence" value="ECO:0007669"/>
    <property type="project" value="UniProtKB-KW"/>
</dbReference>
<dbReference type="CDD" id="cd19501">
    <property type="entry name" value="RecA-like_FtsH"/>
    <property type="match status" value="1"/>
</dbReference>
<dbReference type="FunFam" id="1.10.8.60:FF:000001">
    <property type="entry name" value="ATP-dependent zinc metalloprotease FtsH"/>
    <property type="match status" value="1"/>
</dbReference>
<dbReference type="FunFam" id="1.20.58.760:FF:000001">
    <property type="entry name" value="ATP-dependent zinc metalloprotease FtsH"/>
    <property type="match status" value="1"/>
</dbReference>
<dbReference type="FunFam" id="3.40.50.300:FF:000001">
    <property type="entry name" value="ATP-dependent zinc metalloprotease FtsH"/>
    <property type="match status" value="1"/>
</dbReference>
<dbReference type="Gene3D" id="1.10.8.60">
    <property type="match status" value="1"/>
</dbReference>
<dbReference type="Gene3D" id="3.40.50.300">
    <property type="entry name" value="P-loop containing nucleotide triphosphate hydrolases"/>
    <property type="match status" value="1"/>
</dbReference>
<dbReference type="Gene3D" id="1.20.58.760">
    <property type="entry name" value="Peptidase M41"/>
    <property type="match status" value="1"/>
</dbReference>
<dbReference type="HAMAP" id="MF_01458">
    <property type="entry name" value="FtsH"/>
    <property type="match status" value="1"/>
</dbReference>
<dbReference type="InterPro" id="IPR003593">
    <property type="entry name" value="AAA+_ATPase"/>
</dbReference>
<dbReference type="InterPro" id="IPR041569">
    <property type="entry name" value="AAA_lid_3"/>
</dbReference>
<dbReference type="InterPro" id="IPR003959">
    <property type="entry name" value="ATPase_AAA_core"/>
</dbReference>
<dbReference type="InterPro" id="IPR003960">
    <property type="entry name" value="ATPase_AAA_CS"/>
</dbReference>
<dbReference type="InterPro" id="IPR005936">
    <property type="entry name" value="FtsH"/>
</dbReference>
<dbReference type="InterPro" id="IPR027417">
    <property type="entry name" value="P-loop_NTPase"/>
</dbReference>
<dbReference type="InterPro" id="IPR011546">
    <property type="entry name" value="Pept_M41_FtsH_extracell"/>
</dbReference>
<dbReference type="InterPro" id="IPR000642">
    <property type="entry name" value="Peptidase_M41"/>
</dbReference>
<dbReference type="InterPro" id="IPR037219">
    <property type="entry name" value="Peptidase_M41-like"/>
</dbReference>
<dbReference type="NCBIfam" id="TIGR01241">
    <property type="entry name" value="FtsH_fam"/>
    <property type="match status" value="1"/>
</dbReference>
<dbReference type="PANTHER" id="PTHR23076:SF97">
    <property type="entry name" value="ATP-DEPENDENT ZINC METALLOPROTEASE YME1L1"/>
    <property type="match status" value="1"/>
</dbReference>
<dbReference type="PANTHER" id="PTHR23076">
    <property type="entry name" value="METALLOPROTEASE M41 FTSH"/>
    <property type="match status" value="1"/>
</dbReference>
<dbReference type="Pfam" id="PF00004">
    <property type="entry name" value="AAA"/>
    <property type="match status" value="1"/>
</dbReference>
<dbReference type="Pfam" id="PF17862">
    <property type="entry name" value="AAA_lid_3"/>
    <property type="match status" value="1"/>
</dbReference>
<dbReference type="Pfam" id="PF06480">
    <property type="entry name" value="FtsH_ext"/>
    <property type="match status" value="1"/>
</dbReference>
<dbReference type="Pfam" id="PF01434">
    <property type="entry name" value="Peptidase_M41"/>
    <property type="match status" value="1"/>
</dbReference>
<dbReference type="SMART" id="SM00382">
    <property type="entry name" value="AAA"/>
    <property type="match status" value="1"/>
</dbReference>
<dbReference type="SUPFAM" id="SSF140990">
    <property type="entry name" value="FtsH protease domain-like"/>
    <property type="match status" value="1"/>
</dbReference>
<dbReference type="SUPFAM" id="SSF52540">
    <property type="entry name" value="P-loop containing nucleoside triphosphate hydrolases"/>
    <property type="match status" value="1"/>
</dbReference>
<dbReference type="PROSITE" id="PS00674">
    <property type="entry name" value="AAA"/>
    <property type="match status" value="1"/>
</dbReference>
<gene>
    <name evidence="1" type="primary">ftsH</name>
    <name type="ordered locus">Cagg_2664</name>
</gene>
<accession>B8G4Q6</accession>